<gene>
    <name type="primary">ndhF</name>
</gene>
<evidence type="ECO:0000250" key="1"/>
<evidence type="ECO:0000255" key="2"/>
<evidence type="ECO:0000305" key="3"/>
<comment type="function">
    <text evidence="1">NDH shuttles electrons from NAD(P)H:plastoquinone, via FMN and iron-sulfur (Fe-S) centers, to quinones in the photosynthetic chain and possibly in a chloroplast respiratory chain. The immediate electron acceptor for the enzyme in this species is believed to be plastoquinone. Couples the redox reaction to proton translocation, and thus conserves the redox energy in a proton gradient (By similarity).</text>
</comment>
<comment type="catalytic activity">
    <reaction>
        <text>a plastoquinone + NADH + (n+1) H(+)(in) = a plastoquinol + NAD(+) + n H(+)(out)</text>
        <dbReference type="Rhea" id="RHEA:42608"/>
        <dbReference type="Rhea" id="RHEA-COMP:9561"/>
        <dbReference type="Rhea" id="RHEA-COMP:9562"/>
        <dbReference type="ChEBI" id="CHEBI:15378"/>
        <dbReference type="ChEBI" id="CHEBI:17757"/>
        <dbReference type="ChEBI" id="CHEBI:57540"/>
        <dbReference type="ChEBI" id="CHEBI:57945"/>
        <dbReference type="ChEBI" id="CHEBI:62192"/>
    </reaction>
</comment>
<comment type="catalytic activity">
    <reaction>
        <text>a plastoquinone + NADPH + (n+1) H(+)(in) = a plastoquinol + NADP(+) + n H(+)(out)</text>
        <dbReference type="Rhea" id="RHEA:42612"/>
        <dbReference type="Rhea" id="RHEA-COMP:9561"/>
        <dbReference type="Rhea" id="RHEA-COMP:9562"/>
        <dbReference type="ChEBI" id="CHEBI:15378"/>
        <dbReference type="ChEBI" id="CHEBI:17757"/>
        <dbReference type="ChEBI" id="CHEBI:57783"/>
        <dbReference type="ChEBI" id="CHEBI:58349"/>
        <dbReference type="ChEBI" id="CHEBI:62192"/>
    </reaction>
</comment>
<comment type="subunit">
    <text evidence="1">NDH is composed of at least 16 different subunits, 5 of which are encoded in the nucleus.</text>
</comment>
<comment type="subcellular location">
    <subcellularLocation>
        <location evidence="1">Plastid</location>
        <location evidence="1">Chloroplast thylakoid membrane</location>
        <topology evidence="1">Multi-pass membrane protein</topology>
    </subcellularLocation>
</comment>
<comment type="similarity">
    <text evidence="3">Belongs to the complex I subunit 5 family.</text>
</comment>
<organism>
    <name type="scientific">Calycanthus floridus var. glaucus</name>
    <name type="common">Eastern sweetshrub</name>
    <name type="synonym">Calycanthus fertilis var. ferax</name>
    <dbReference type="NCBI Taxonomy" id="212734"/>
    <lineage>
        <taxon>Eukaryota</taxon>
        <taxon>Viridiplantae</taxon>
        <taxon>Streptophyta</taxon>
        <taxon>Embryophyta</taxon>
        <taxon>Tracheophyta</taxon>
        <taxon>Spermatophyta</taxon>
        <taxon>Magnoliopsida</taxon>
        <taxon>Magnoliidae</taxon>
        <taxon>Laurales</taxon>
        <taxon>Calycanthaceae</taxon>
        <taxon>Calycanthus</taxon>
    </lineage>
</organism>
<reference key="1">
    <citation type="journal article" date="2003" name="Plant Syst. Evol.">
        <title>The chloroplast genome of the 'basal' angiosperm Calycanthus fertilis -- structural and phylogenetic analyses.</title>
        <authorList>
            <person name="Goremykin V.V."/>
            <person name="Hirsch-Ernst K.I."/>
            <person name="Woelfl S."/>
            <person name="Hellwig F.H."/>
        </authorList>
    </citation>
    <scope>NUCLEOTIDE SEQUENCE [LARGE SCALE GENOMIC DNA]</scope>
</reference>
<name>NU5C_CALFG</name>
<feature type="chain" id="PRO_0000360915" description="NAD(P)H-quinone oxidoreductase subunit 5, chloroplastic">
    <location>
        <begin position="1"/>
        <end position="746"/>
    </location>
</feature>
<feature type="transmembrane region" description="Helical" evidence="2">
    <location>
        <begin position="9"/>
        <end position="29"/>
    </location>
</feature>
<feature type="transmembrane region" description="Helical" evidence="2">
    <location>
        <begin position="40"/>
        <end position="60"/>
    </location>
</feature>
<feature type="transmembrane region" description="Helical" evidence="2">
    <location>
        <begin position="89"/>
        <end position="109"/>
    </location>
</feature>
<feature type="transmembrane region" description="Helical" evidence="2">
    <location>
        <begin position="122"/>
        <end position="139"/>
    </location>
</feature>
<feature type="transmembrane region" description="Helical" evidence="2">
    <location>
        <begin position="147"/>
        <end position="167"/>
    </location>
</feature>
<feature type="transmembrane region" description="Helical" evidence="2">
    <location>
        <begin position="185"/>
        <end position="205"/>
    </location>
</feature>
<feature type="transmembrane region" description="Helical" evidence="2">
    <location>
        <begin position="219"/>
        <end position="239"/>
    </location>
</feature>
<feature type="transmembrane region" description="Helical" evidence="2">
    <location>
        <begin position="258"/>
        <end position="278"/>
    </location>
</feature>
<feature type="transmembrane region" description="Helical" evidence="2">
    <location>
        <begin position="280"/>
        <end position="300"/>
    </location>
</feature>
<feature type="transmembrane region" description="Helical" evidence="2">
    <location>
        <begin position="327"/>
        <end position="347"/>
    </location>
</feature>
<feature type="transmembrane region" description="Helical" evidence="2">
    <location>
        <begin position="396"/>
        <end position="416"/>
    </location>
</feature>
<feature type="transmembrane region" description="Helical" evidence="2">
    <location>
        <begin position="425"/>
        <end position="445"/>
    </location>
</feature>
<feature type="transmembrane region" description="Helical" evidence="2">
    <location>
        <begin position="546"/>
        <end position="566"/>
    </location>
</feature>
<feature type="transmembrane region" description="Helical" evidence="2">
    <location>
        <begin position="605"/>
        <end position="625"/>
    </location>
</feature>
<feature type="transmembrane region" description="Helical" evidence="2">
    <location>
        <begin position="722"/>
        <end position="742"/>
    </location>
</feature>
<proteinExistence type="inferred from homology"/>
<geneLocation type="chloroplast"/>
<dbReference type="EC" id="7.1.1.-"/>
<dbReference type="EMBL" id="AJ428413">
    <property type="protein sequence ID" value="CAD28769.1"/>
    <property type="molecule type" value="Genomic_DNA"/>
</dbReference>
<dbReference type="RefSeq" id="NP_862802.1">
    <property type="nucleotide sequence ID" value="NC_004993.1"/>
</dbReference>
<dbReference type="SMR" id="Q7YJT6"/>
<dbReference type="GeneID" id="2597990"/>
<dbReference type="GO" id="GO:0009535">
    <property type="term" value="C:chloroplast thylakoid membrane"/>
    <property type="evidence" value="ECO:0007669"/>
    <property type="project" value="UniProtKB-SubCell"/>
</dbReference>
<dbReference type="GO" id="GO:0008137">
    <property type="term" value="F:NADH dehydrogenase (ubiquinone) activity"/>
    <property type="evidence" value="ECO:0007669"/>
    <property type="project" value="InterPro"/>
</dbReference>
<dbReference type="GO" id="GO:0048038">
    <property type="term" value="F:quinone binding"/>
    <property type="evidence" value="ECO:0007669"/>
    <property type="project" value="UniProtKB-KW"/>
</dbReference>
<dbReference type="GO" id="GO:0042773">
    <property type="term" value="P:ATP synthesis coupled electron transport"/>
    <property type="evidence" value="ECO:0007669"/>
    <property type="project" value="InterPro"/>
</dbReference>
<dbReference type="GO" id="GO:0015990">
    <property type="term" value="P:electron transport coupled proton transport"/>
    <property type="evidence" value="ECO:0007669"/>
    <property type="project" value="TreeGrafter"/>
</dbReference>
<dbReference type="Gene3D" id="1.20.5.2700">
    <property type="match status" value="1"/>
</dbReference>
<dbReference type="InterPro" id="IPR002128">
    <property type="entry name" value="NADH_UbQ_OxRdtase_chlpt_su5_C"/>
</dbReference>
<dbReference type="InterPro" id="IPR018393">
    <property type="entry name" value="NADHpl_OxRdtase_5_subgr"/>
</dbReference>
<dbReference type="InterPro" id="IPR001750">
    <property type="entry name" value="ND/Mrp_TM"/>
</dbReference>
<dbReference type="InterPro" id="IPR003945">
    <property type="entry name" value="NU5C-like"/>
</dbReference>
<dbReference type="InterPro" id="IPR001516">
    <property type="entry name" value="Proton_antipo_N"/>
</dbReference>
<dbReference type="NCBIfam" id="TIGR01974">
    <property type="entry name" value="NDH_I_L"/>
    <property type="match status" value="1"/>
</dbReference>
<dbReference type="NCBIfam" id="NF005141">
    <property type="entry name" value="PRK06590.1"/>
    <property type="match status" value="1"/>
</dbReference>
<dbReference type="PANTHER" id="PTHR42829">
    <property type="entry name" value="NADH-UBIQUINONE OXIDOREDUCTASE CHAIN 5"/>
    <property type="match status" value="1"/>
</dbReference>
<dbReference type="PANTHER" id="PTHR42829:SF2">
    <property type="entry name" value="NADH-UBIQUINONE OXIDOREDUCTASE CHAIN 5"/>
    <property type="match status" value="1"/>
</dbReference>
<dbReference type="Pfam" id="PF01010">
    <property type="entry name" value="Proton_antipo_C"/>
    <property type="match status" value="1"/>
</dbReference>
<dbReference type="Pfam" id="PF00361">
    <property type="entry name" value="Proton_antipo_M"/>
    <property type="match status" value="1"/>
</dbReference>
<dbReference type="Pfam" id="PF00662">
    <property type="entry name" value="Proton_antipo_N"/>
    <property type="match status" value="1"/>
</dbReference>
<dbReference type="PRINTS" id="PR01434">
    <property type="entry name" value="NADHDHGNASE5"/>
</dbReference>
<dbReference type="PRINTS" id="PR01435">
    <property type="entry name" value="NPOXDRDTASE5"/>
</dbReference>
<accession>Q7YJT6</accession>
<protein>
    <recommendedName>
        <fullName>NAD(P)H-quinone oxidoreductase subunit 5, chloroplastic</fullName>
        <ecNumber>7.1.1.-</ecNumber>
    </recommendedName>
    <alternativeName>
        <fullName>NAD(P)H dehydrogenase subunit 5</fullName>
    </alternativeName>
    <alternativeName>
        <fullName>NADH-plastoquinone oxidoreductase subunit 5</fullName>
    </alternativeName>
</protein>
<sequence length="746" mass="83684">MEHTYQHAWIIPFAPLPFTMSIGLGLLLVPTATKNLRRMWTFPSVSLLSIAMVFSVNLSIQQINGSSIYQHLWSWTINNDFSFEFGHLIDPLTSIMSILITTVGIMVLIYSDNYMSHDQGYLRFFAYMSFSNTSMLGLVTSSNLIQIYIFWELVGMCSYLLIGFWFTRPTAANACQKAFVTNRVGDFGLLLGILGFYWITGSFEFRDLFEIFTNLIHNNGVNSLFATLCAFLLFVGAVAKSAQFPLHVWLPDAMEGPTPISALIHAATMVAAGIFLVARLLPLFTVIPYIMNLISLIGVITLLLGATLALAQRDIKRSLAYSTMSQLGYIMLAPGIGSYRAALFHLITHAYSKALLFLGSGSIIHSMEPIVGYSPDKSQNVVLMGGLTKYLPITKTTFLLGTLSLCGIPPLACFWSKDEILNDSWLYSPIFAIIACSTAGLTAFYMVRVYLLTFDGHLHVHFQNYSGTRNSSFYSISIWGKEGTKFVNGNLPLSTLKPNKISFFSKKISNKMDGNVGNRIRSFSFRIRFDNKETFVYPHESDNTMLLPLLGLVLFTLFVGSVGIPFDQGGTEFDILSKWLNPSINLLHPNSNVSVDWYEFGTNAIYSVSIACFGIFIASLFYGSIYSSFQNLDFINSFVKKPGSKRIFLDRIINVIYNWSYNRGYIDVFYTTCFTKGIRGLAELTYLLDRRLIDGIANGIGMASFFVGEGIKYVGGGRISSYLFVYLSYVSILLLIYYFYFFSFLF</sequence>
<keyword id="KW-0150">Chloroplast</keyword>
<keyword id="KW-0472">Membrane</keyword>
<keyword id="KW-0520">NAD</keyword>
<keyword id="KW-0521">NADP</keyword>
<keyword id="KW-0934">Plastid</keyword>
<keyword id="KW-0618">Plastoquinone</keyword>
<keyword id="KW-0874">Quinone</keyword>
<keyword id="KW-0793">Thylakoid</keyword>
<keyword id="KW-1278">Translocase</keyword>
<keyword id="KW-0812">Transmembrane</keyword>
<keyword id="KW-1133">Transmembrane helix</keyword>
<keyword id="KW-0813">Transport</keyword>